<organism>
    <name type="scientific">Xanthomonas oryzae pv. oryzae (strain KACC10331 / KXO85)</name>
    <dbReference type="NCBI Taxonomy" id="291331"/>
    <lineage>
        <taxon>Bacteria</taxon>
        <taxon>Pseudomonadati</taxon>
        <taxon>Pseudomonadota</taxon>
        <taxon>Gammaproteobacteria</taxon>
        <taxon>Lysobacterales</taxon>
        <taxon>Lysobacteraceae</taxon>
        <taxon>Xanthomonas</taxon>
    </lineage>
</organism>
<evidence type="ECO:0000255" key="1">
    <source>
        <dbReference type="HAMAP-Rule" id="MF_00658"/>
    </source>
</evidence>
<evidence type="ECO:0000305" key="2"/>
<proteinExistence type="inferred from homology"/>
<name>RLMH_XANOR</name>
<comment type="function">
    <text evidence="1">Specifically methylates the pseudouridine at position 1915 (m3Psi1915) in 23S rRNA.</text>
</comment>
<comment type="catalytic activity">
    <reaction evidence="1">
        <text>pseudouridine(1915) in 23S rRNA + S-adenosyl-L-methionine = N(3)-methylpseudouridine(1915) in 23S rRNA + S-adenosyl-L-homocysteine + H(+)</text>
        <dbReference type="Rhea" id="RHEA:42752"/>
        <dbReference type="Rhea" id="RHEA-COMP:10221"/>
        <dbReference type="Rhea" id="RHEA-COMP:10222"/>
        <dbReference type="ChEBI" id="CHEBI:15378"/>
        <dbReference type="ChEBI" id="CHEBI:57856"/>
        <dbReference type="ChEBI" id="CHEBI:59789"/>
        <dbReference type="ChEBI" id="CHEBI:65314"/>
        <dbReference type="ChEBI" id="CHEBI:74486"/>
        <dbReference type="EC" id="2.1.1.177"/>
    </reaction>
</comment>
<comment type="subunit">
    <text evidence="1">Homodimer.</text>
</comment>
<comment type="subcellular location">
    <subcellularLocation>
        <location evidence="1">Cytoplasm</location>
    </subcellularLocation>
</comment>
<comment type="similarity">
    <text evidence="1">Belongs to the RNA methyltransferase RlmH family.</text>
</comment>
<comment type="sequence caution" evidence="2">
    <conflict type="erroneous initiation">
        <sequence resource="EMBL-CDS" id="AAW76576"/>
    </conflict>
</comment>
<reference key="1">
    <citation type="journal article" date="2005" name="Nucleic Acids Res.">
        <title>The genome sequence of Xanthomonas oryzae pathovar oryzae KACC10331, the bacterial blight pathogen of rice.</title>
        <authorList>
            <person name="Lee B.-M."/>
            <person name="Park Y.-J."/>
            <person name="Park D.-S."/>
            <person name="Kang H.-W."/>
            <person name="Kim J.-G."/>
            <person name="Song E.-S."/>
            <person name="Park I.-C."/>
            <person name="Yoon U.-H."/>
            <person name="Hahn J.-H."/>
            <person name="Koo B.-S."/>
            <person name="Lee G.-B."/>
            <person name="Kim H."/>
            <person name="Park H.-S."/>
            <person name="Yoon K.-O."/>
            <person name="Kim J.-H."/>
            <person name="Jung C.-H."/>
            <person name="Koh N.-H."/>
            <person name="Seo J.-S."/>
            <person name="Go S.-J."/>
        </authorList>
    </citation>
    <scope>NUCLEOTIDE SEQUENCE [LARGE SCALE GENOMIC DNA]</scope>
    <source>
        <strain>KACC10331 / KXO85</strain>
    </source>
</reference>
<gene>
    <name evidence="1" type="primary">rlmH</name>
    <name type="ordered locus">XOO3322</name>
</gene>
<protein>
    <recommendedName>
        <fullName evidence="1">Ribosomal RNA large subunit methyltransferase H</fullName>
        <ecNumber evidence="1">2.1.1.177</ecNumber>
    </recommendedName>
    <alternativeName>
        <fullName evidence="1">23S rRNA (pseudouridine1915-N3)-methyltransferase</fullName>
    </alternativeName>
    <alternativeName>
        <fullName evidence="1">23S rRNA m3Psi1915 methyltransferase</fullName>
    </alternativeName>
    <alternativeName>
        <fullName evidence="1">rRNA (pseudouridine-N3-)-methyltransferase RlmH</fullName>
    </alternativeName>
</protein>
<keyword id="KW-0963">Cytoplasm</keyword>
<keyword id="KW-0489">Methyltransferase</keyword>
<keyword id="KW-1185">Reference proteome</keyword>
<keyword id="KW-0698">rRNA processing</keyword>
<keyword id="KW-0949">S-adenosyl-L-methionine</keyword>
<keyword id="KW-0808">Transferase</keyword>
<sequence>MKCRLIATGERAPSWVAQGFAEYQKRLSHWMPLELVEIEPGLRGKGRDAQRATDDEGRRVLAALPKNAYVVALDVPGRPLSSEQLAQRMEHWRGQGRDLALLIGGPEGHSAEVLKSASESWSIGPLTLPHMLVRLIVAEQLYRAAAMLANHPYHRA</sequence>
<accession>Q5GXJ5</accession>
<dbReference type="EC" id="2.1.1.177" evidence="1"/>
<dbReference type="EMBL" id="AE013598">
    <property type="protein sequence ID" value="AAW76576.1"/>
    <property type="status" value="ALT_INIT"/>
    <property type="molecule type" value="Genomic_DNA"/>
</dbReference>
<dbReference type="SMR" id="Q5GXJ5"/>
<dbReference type="STRING" id="291331.XOO3322"/>
<dbReference type="KEGG" id="xoo:XOO3322"/>
<dbReference type="HOGENOM" id="CLU_100552_1_0_6"/>
<dbReference type="Proteomes" id="UP000006735">
    <property type="component" value="Chromosome"/>
</dbReference>
<dbReference type="GO" id="GO:0005737">
    <property type="term" value="C:cytoplasm"/>
    <property type="evidence" value="ECO:0007669"/>
    <property type="project" value="UniProtKB-SubCell"/>
</dbReference>
<dbReference type="GO" id="GO:0070038">
    <property type="term" value="F:rRNA (pseudouridine-N3-)-methyltransferase activity"/>
    <property type="evidence" value="ECO:0007669"/>
    <property type="project" value="UniProtKB-UniRule"/>
</dbReference>
<dbReference type="CDD" id="cd18081">
    <property type="entry name" value="RlmH-like"/>
    <property type="match status" value="1"/>
</dbReference>
<dbReference type="Gene3D" id="3.40.1280.10">
    <property type="match status" value="1"/>
</dbReference>
<dbReference type="HAMAP" id="MF_00658">
    <property type="entry name" value="23SrRNA_methyltr_H"/>
    <property type="match status" value="1"/>
</dbReference>
<dbReference type="InterPro" id="IPR029028">
    <property type="entry name" value="Alpha/beta_knot_MTases"/>
</dbReference>
<dbReference type="InterPro" id="IPR003742">
    <property type="entry name" value="RlmH-like"/>
</dbReference>
<dbReference type="InterPro" id="IPR029026">
    <property type="entry name" value="tRNA_m1G_MTases_N"/>
</dbReference>
<dbReference type="NCBIfam" id="NF000986">
    <property type="entry name" value="PRK00103.1-4"/>
    <property type="match status" value="1"/>
</dbReference>
<dbReference type="NCBIfam" id="TIGR00246">
    <property type="entry name" value="tRNA_RlmH_YbeA"/>
    <property type="match status" value="1"/>
</dbReference>
<dbReference type="PANTHER" id="PTHR33603">
    <property type="entry name" value="METHYLTRANSFERASE"/>
    <property type="match status" value="1"/>
</dbReference>
<dbReference type="PANTHER" id="PTHR33603:SF1">
    <property type="entry name" value="RIBOSOMAL RNA LARGE SUBUNIT METHYLTRANSFERASE H"/>
    <property type="match status" value="1"/>
</dbReference>
<dbReference type="Pfam" id="PF02590">
    <property type="entry name" value="SPOUT_MTase"/>
    <property type="match status" value="1"/>
</dbReference>
<dbReference type="PIRSF" id="PIRSF004505">
    <property type="entry name" value="MT_bac"/>
    <property type="match status" value="1"/>
</dbReference>
<dbReference type="SUPFAM" id="SSF75217">
    <property type="entry name" value="alpha/beta knot"/>
    <property type="match status" value="1"/>
</dbReference>
<feature type="chain" id="PRO_0000198214" description="Ribosomal RNA large subunit methyltransferase H">
    <location>
        <begin position="1"/>
        <end position="156"/>
    </location>
</feature>
<feature type="binding site" evidence="1">
    <location>
        <position position="73"/>
    </location>
    <ligand>
        <name>S-adenosyl-L-methionine</name>
        <dbReference type="ChEBI" id="CHEBI:59789"/>
    </ligand>
</feature>
<feature type="binding site" evidence="1">
    <location>
        <position position="104"/>
    </location>
    <ligand>
        <name>S-adenosyl-L-methionine</name>
        <dbReference type="ChEBI" id="CHEBI:59789"/>
    </ligand>
</feature>
<feature type="binding site" evidence="1">
    <location>
        <begin position="123"/>
        <end position="128"/>
    </location>
    <ligand>
        <name>S-adenosyl-L-methionine</name>
        <dbReference type="ChEBI" id="CHEBI:59789"/>
    </ligand>
</feature>